<evidence type="ECO:0000250" key="1">
    <source>
        <dbReference type="UniProtKB" id="P23096"/>
    </source>
</evidence>
<evidence type="ECO:0000255" key="2"/>
<evidence type="ECO:0000269" key="3">
    <source>
    </source>
</evidence>
<evidence type="ECO:0000312" key="4">
    <source>
        <dbReference type="EMBL" id="AAX35811.1"/>
    </source>
</evidence>
<keyword id="KW-0903">Direct protein sequencing</keyword>
<keyword id="KW-1015">Disulfide bond</keyword>
<keyword id="KW-0446">Lipid-binding</keyword>
<keyword id="KW-0732">Signal</keyword>
<keyword id="KW-0813">Transport</keyword>
<organism>
    <name type="scientific">Lens culinaris</name>
    <name type="common">Lentil</name>
    <name type="synonym">Cicer lens</name>
    <dbReference type="NCBI Taxonomy" id="3864"/>
    <lineage>
        <taxon>Eukaryota</taxon>
        <taxon>Viridiplantae</taxon>
        <taxon>Streptophyta</taxon>
        <taxon>Embryophyta</taxon>
        <taxon>Tracheophyta</taxon>
        <taxon>Spermatophyta</taxon>
        <taxon>Magnoliopsida</taxon>
        <taxon>eudicotyledons</taxon>
        <taxon>Gunneridae</taxon>
        <taxon>Pentapetalae</taxon>
        <taxon>rosids</taxon>
        <taxon>fabids</taxon>
        <taxon>Fabales</taxon>
        <taxon>Fabaceae</taxon>
        <taxon>Papilionoideae</taxon>
        <taxon>50 kb inversion clade</taxon>
        <taxon>NPAAA clade</taxon>
        <taxon>Hologalegina</taxon>
        <taxon>IRL clade</taxon>
        <taxon>Fabeae</taxon>
        <taxon>Lens</taxon>
    </lineage>
</organism>
<dbReference type="EMBL" id="AY793558">
    <property type="protein sequence ID" value="AAX35811.1"/>
    <property type="molecule type" value="mRNA"/>
</dbReference>
<dbReference type="BMRB" id="A0AT33"/>
<dbReference type="SMR" id="A0AT33"/>
<dbReference type="Allergome" id="8712">
    <property type="allergen name" value="Len c 3"/>
</dbReference>
<dbReference type="GO" id="GO:0008289">
    <property type="term" value="F:lipid binding"/>
    <property type="evidence" value="ECO:0007669"/>
    <property type="project" value="UniProtKB-KW"/>
</dbReference>
<dbReference type="GO" id="GO:0006869">
    <property type="term" value="P:lipid transport"/>
    <property type="evidence" value="ECO:0007669"/>
    <property type="project" value="InterPro"/>
</dbReference>
<dbReference type="CDD" id="cd01960">
    <property type="entry name" value="nsLTP1"/>
    <property type="match status" value="1"/>
</dbReference>
<dbReference type="FunFam" id="1.10.110.10:FF:000002">
    <property type="entry name" value="Non-specific lipid-transfer protein"/>
    <property type="match status" value="1"/>
</dbReference>
<dbReference type="Gene3D" id="1.10.110.10">
    <property type="entry name" value="Plant lipid-transfer and hydrophobic proteins"/>
    <property type="match status" value="1"/>
</dbReference>
<dbReference type="InterPro" id="IPR036312">
    <property type="entry name" value="Bifun_inhib/LTP/seed_sf"/>
</dbReference>
<dbReference type="InterPro" id="IPR016140">
    <property type="entry name" value="Bifunc_inhib/LTP/seed_store"/>
</dbReference>
<dbReference type="InterPro" id="IPR000528">
    <property type="entry name" value="Plant_nsLTP"/>
</dbReference>
<dbReference type="PANTHER" id="PTHR33076">
    <property type="entry name" value="NON-SPECIFIC LIPID-TRANSFER PROTEIN 2-RELATED"/>
    <property type="match status" value="1"/>
</dbReference>
<dbReference type="Pfam" id="PF00234">
    <property type="entry name" value="Tryp_alpha_amyl"/>
    <property type="match status" value="1"/>
</dbReference>
<dbReference type="PRINTS" id="PR00382">
    <property type="entry name" value="LIPIDTRNSFER"/>
</dbReference>
<dbReference type="SMART" id="SM00499">
    <property type="entry name" value="AAI"/>
    <property type="match status" value="1"/>
</dbReference>
<dbReference type="SUPFAM" id="SSF47699">
    <property type="entry name" value="Bifunctional inhibitor/lipid-transfer protein/seed storage 2S albumin"/>
    <property type="match status" value="1"/>
</dbReference>
<dbReference type="PROSITE" id="PS00597">
    <property type="entry name" value="PLANT_LTP"/>
    <property type="match status" value="1"/>
</dbReference>
<comment type="function">
    <text>Plant non-specific lipid-transfer proteins transfer phospholipids as well as galactolipids across membranes. May play a role in wax or cutin deposition in the cell walls of expanding epidermal cells and certain secretory tissues.</text>
</comment>
<comment type="mass spectrometry">
    <molecule>Non-specific lipid-transfer protein 4</molecule>
    <text>LTP4.</text>
</comment>
<comment type="mass spectrometry">
    <molecule>Non-specific lipid-transfer protein 8</molecule>
    <text>LTP8.</text>
</comment>
<comment type="similarity">
    <text evidence="2">Belongs to the plant LTP family.</text>
</comment>
<protein>
    <recommendedName>
        <fullName>Non-specific lipid-transfer protein 4</fullName>
        <shortName>LTP4</shortName>
    </recommendedName>
    <component>
        <recommendedName>
            <fullName>Non-specific lipid-transfer protein 8</fullName>
            <shortName>LTP8</shortName>
        </recommendedName>
    </component>
</protein>
<proteinExistence type="evidence at protein level"/>
<reference key="1">
    <citation type="journal article" date="2007" name="Biochemistry (Mosc.)">
        <title>Purification and primary structure of novel lipid transfer proteins from germinated lentil (Lens culinaris) seeds.</title>
        <authorList>
            <person name="Finkina E.I."/>
            <person name="Balandin S.V."/>
            <person name="Serebryakova M.V."/>
            <person name="Potapenko N.A."/>
            <person name="Tagaev A.A."/>
            <person name="Ovchinnikova T.V."/>
        </authorList>
    </citation>
    <scope>NUCLEOTIDE SEQUENCE [MRNA]</scope>
    <scope>PROTEIN SEQUENCE OF 18-39</scope>
    <scope>MASS SPECTROMETRY</scope>
    <source>
        <tissue>Seed</tissue>
        <tissue>Seedling</tissue>
    </source>
</reference>
<name>NLTP4_LENCU</name>
<accession>A0AT33</accession>
<accession>P84255</accession>
<sequence>CVVLVMCMVVIAPMAEGAISCGAVTSDLSPCLTYLTGGPGPSPQCCGGVKKLLAAANTTPDRQAACNCLKSAAGSITKLNTNNAAALPGKCGVNIPYKISTSTNCNTVKF</sequence>
<feature type="signal peptide" evidence="3">
    <location>
        <begin position="1" status="less than"/>
        <end position="17"/>
    </location>
</feature>
<feature type="chain" id="PRO_5000147978" description="Non-specific lipid-transfer protein 4">
    <location>
        <begin position="18"/>
        <end position="110"/>
    </location>
</feature>
<feature type="chain" id="PRO_0000287337" description="Non-specific lipid-transfer protein 8">
    <location>
        <begin position="18"/>
        <end position="109"/>
    </location>
</feature>
<feature type="disulfide bond" evidence="1">
    <location>
        <begin position="21"/>
        <end position="68"/>
    </location>
</feature>
<feature type="disulfide bond" evidence="1">
    <location>
        <begin position="31"/>
        <end position="45"/>
    </location>
</feature>
<feature type="disulfide bond" evidence="1">
    <location>
        <begin position="46"/>
        <end position="91"/>
    </location>
</feature>
<feature type="disulfide bond" evidence="1">
    <location>
        <begin position="66"/>
        <end position="105"/>
    </location>
</feature>
<feature type="non-terminal residue" evidence="4">
    <location>
        <position position="1"/>
    </location>
</feature>